<feature type="chain" id="PRO_0000300307" description="DNA-directed RNA polymerase subunit beta">
    <location>
        <begin position="1"/>
        <end position="1115"/>
    </location>
</feature>
<feature type="region of interest" description="Disordered" evidence="2">
    <location>
        <begin position="1084"/>
        <end position="1115"/>
    </location>
</feature>
<feature type="compositionally biased region" description="Acidic residues" evidence="2">
    <location>
        <begin position="1088"/>
        <end position="1115"/>
    </location>
</feature>
<name>RPOB_DESHY</name>
<sequence>MFYPVKVGTRERWSYSRIREVLDMPNLIEIQQNSYQWFLDEGLREMFRDISPIQDFTGNLVLEFIDYSLGEPKYEVEECKERDVTYAAPLRVKVRLINKETGEVKEQEVFMGDFPLMTTKGTFIINGAERVIVSQLVRSPGVYYSESIDPSGKKVFGATVIPNRGAWLEFETDVNDNIFVRVDRTRKLPATVLIRALGYATNGQIAELFDDNEHIRITLERDNTESAEEALVEIYKRLRPGEPPTVDSARSLLEALFFDPKRYDLAKVGRYKLNKKLNLSVPTDVHHLTKEDIVASLRQMLTLMSGEGHKDDIDHLGNRRLRSVGELLQNQFRIGLSRMERVVRERMTIQDVDVITPQVLINIRPVVAAIKEFFGSSQLSQFMDQTNPLAELTHKRRLSALGPGGLSRERAGFEVRDVHHSHYGRMCPIETPEGPNIGLIGSLSTYGRINPYGFIEAPYRKVNNGQVTDQIDYLTADEEEKFVVAQANAPLTDDGHFIEEKIDGRHGPDFVLVAPERIDYMDVSPKQMVSIATALIPFLEHDDANRALMGANMQRQAVPLLRTDAPYVGTGMEYKAAKDSGVCVLASKDGTVERATAEDIIIRHDDGTLEKHKLLKYLRSNQGTCINQRPIVMKNERVEAGQIIADGPSTDHGELALGRNVLIAFMTWEGYNYEDAILISEKLVKEDYYTSIHIEEYEADARDTKLGPEEITRDIPNVGEDVLKDLDERGIIRIGAEVSTGDILVGKVTPKGETELTAEERLLRAIFGEKAREVRDTSLRVPHGEAGKIVDVKVFTRENGDELAPGVNELVRVYIAQKRKISVGDKMAGRHGNKGVISRIMKQEDMPFLPDGTPVEIVLNPLGVPSRMNIGQVMETHLGWAAKALGLRLATPVFDGAQEEDVFATLRKAGLPETGKTVLYDGRTGDPFDNKITVGYMYFLKLHHLVDDKIHARSTGPYSLVTQQPLGGKAQFGGQRFGEMEVWALEAYGAAYTLQEILTVKSDDVVGRVKTYEAIVKGENIPEPGVPESFKVLIKELQSLGLDVRVLSENDEEIEIREIDEDVTETAKELGIDLHEDLPAPVIHEAGEGEDDEYFEEDEEAVDDEPMTFDDDDME</sequence>
<reference key="1">
    <citation type="journal article" date="2006" name="J. Bacteriol.">
        <title>Complete genome sequence of the dehalorespiring bacterium Desulfitobacterium hafniense Y51 and comparison with Dehalococcoides ethenogenes 195.</title>
        <authorList>
            <person name="Nonaka H."/>
            <person name="Keresztes G."/>
            <person name="Shinoda Y."/>
            <person name="Ikenaga Y."/>
            <person name="Abe M."/>
            <person name="Naito K."/>
            <person name="Inatomi K."/>
            <person name="Furukawa K."/>
            <person name="Inui M."/>
            <person name="Yukawa H."/>
        </authorList>
    </citation>
    <scope>NUCLEOTIDE SEQUENCE [LARGE SCALE GENOMIC DNA]</scope>
    <source>
        <strain>Y51</strain>
    </source>
</reference>
<protein>
    <recommendedName>
        <fullName evidence="1">DNA-directed RNA polymerase subunit beta</fullName>
        <shortName evidence="1">RNAP subunit beta</shortName>
        <ecNumber evidence="1">2.7.7.6</ecNumber>
    </recommendedName>
    <alternativeName>
        <fullName evidence="1">RNA polymerase subunit beta</fullName>
    </alternativeName>
    <alternativeName>
        <fullName evidence="1">Transcriptase subunit beta</fullName>
    </alternativeName>
</protein>
<evidence type="ECO:0000255" key="1">
    <source>
        <dbReference type="HAMAP-Rule" id="MF_01321"/>
    </source>
</evidence>
<evidence type="ECO:0000256" key="2">
    <source>
        <dbReference type="SAM" id="MobiDB-lite"/>
    </source>
</evidence>
<evidence type="ECO:0000305" key="3"/>
<organism>
    <name type="scientific">Desulfitobacterium hafniense (strain Y51)</name>
    <dbReference type="NCBI Taxonomy" id="138119"/>
    <lineage>
        <taxon>Bacteria</taxon>
        <taxon>Bacillati</taxon>
        <taxon>Bacillota</taxon>
        <taxon>Clostridia</taxon>
        <taxon>Eubacteriales</taxon>
        <taxon>Desulfitobacteriaceae</taxon>
        <taxon>Desulfitobacterium</taxon>
    </lineage>
</organism>
<gene>
    <name evidence="1" type="primary">rpoB</name>
    <name type="ordered locus">DSY0463</name>
</gene>
<dbReference type="EC" id="2.7.7.6" evidence="1"/>
<dbReference type="EMBL" id="AP008230">
    <property type="protein sequence ID" value="BAE82252.1"/>
    <property type="status" value="ALT_INIT"/>
    <property type="molecule type" value="Genomic_DNA"/>
</dbReference>
<dbReference type="RefSeq" id="WP_041272205.1">
    <property type="nucleotide sequence ID" value="NC_007907.1"/>
</dbReference>
<dbReference type="SMR" id="Q250P0"/>
<dbReference type="STRING" id="138119.DSY0463"/>
<dbReference type="KEGG" id="dsy:DSY0463"/>
<dbReference type="eggNOG" id="COG0085">
    <property type="taxonomic scope" value="Bacteria"/>
</dbReference>
<dbReference type="HOGENOM" id="CLU_000524_4_1_9"/>
<dbReference type="Proteomes" id="UP000001946">
    <property type="component" value="Chromosome"/>
</dbReference>
<dbReference type="GO" id="GO:0000428">
    <property type="term" value="C:DNA-directed RNA polymerase complex"/>
    <property type="evidence" value="ECO:0007669"/>
    <property type="project" value="UniProtKB-KW"/>
</dbReference>
<dbReference type="GO" id="GO:0003677">
    <property type="term" value="F:DNA binding"/>
    <property type="evidence" value="ECO:0007669"/>
    <property type="project" value="UniProtKB-UniRule"/>
</dbReference>
<dbReference type="GO" id="GO:0003899">
    <property type="term" value="F:DNA-directed RNA polymerase activity"/>
    <property type="evidence" value="ECO:0007669"/>
    <property type="project" value="UniProtKB-UniRule"/>
</dbReference>
<dbReference type="GO" id="GO:0032549">
    <property type="term" value="F:ribonucleoside binding"/>
    <property type="evidence" value="ECO:0007669"/>
    <property type="project" value="InterPro"/>
</dbReference>
<dbReference type="GO" id="GO:0006351">
    <property type="term" value="P:DNA-templated transcription"/>
    <property type="evidence" value="ECO:0007669"/>
    <property type="project" value="UniProtKB-UniRule"/>
</dbReference>
<dbReference type="CDD" id="cd00653">
    <property type="entry name" value="RNA_pol_B_RPB2"/>
    <property type="match status" value="1"/>
</dbReference>
<dbReference type="FunFam" id="3.90.1800.10:FF:000001">
    <property type="entry name" value="DNA-directed RNA polymerase subunit beta"/>
    <property type="match status" value="1"/>
</dbReference>
<dbReference type="Gene3D" id="2.40.50.100">
    <property type="match status" value="1"/>
</dbReference>
<dbReference type="Gene3D" id="2.40.50.150">
    <property type="match status" value="1"/>
</dbReference>
<dbReference type="Gene3D" id="3.90.1100.10">
    <property type="match status" value="1"/>
</dbReference>
<dbReference type="Gene3D" id="2.30.150.10">
    <property type="entry name" value="DNA-directed RNA polymerase, beta subunit, external 1 domain"/>
    <property type="match status" value="1"/>
</dbReference>
<dbReference type="Gene3D" id="2.40.270.10">
    <property type="entry name" value="DNA-directed RNA polymerase, subunit 2, domain 6"/>
    <property type="match status" value="2"/>
</dbReference>
<dbReference type="Gene3D" id="3.90.1800.10">
    <property type="entry name" value="RNA polymerase alpha subunit dimerisation domain"/>
    <property type="match status" value="1"/>
</dbReference>
<dbReference type="Gene3D" id="3.90.1110.10">
    <property type="entry name" value="RNA polymerase Rpb2, domain 2"/>
    <property type="match status" value="1"/>
</dbReference>
<dbReference type="HAMAP" id="MF_01321">
    <property type="entry name" value="RNApol_bact_RpoB"/>
    <property type="match status" value="1"/>
</dbReference>
<dbReference type="InterPro" id="IPR042107">
    <property type="entry name" value="DNA-dir_RNA_pol_bsu_ext_1_sf"/>
</dbReference>
<dbReference type="InterPro" id="IPR019462">
    <property type="entry name" value="DNA-dir_RNA_pol_bsu_external_1"/>
</dbReference>
<dbReference type="InterPro" id="IPR015712">
    <property type="entry name" value="DNA-dir_RNA_pol_su2"/>
</dbReference>
<dbReference type="InterPro" id="IPR007120">
    <property type="entry name" value="DNA-dir_RNAP_su2_dom"/>
</dbReference>
<dbReference type="InterPro" id="IPR037033">
    <property type="entry name" value="DNA-dir_RNAP_su2_hyb_sf"/>
</dbReference>
<dbReference type="InterPro" id="IPR010243">
    <property type="entry name" value="RNA_pol_bsu_bac"/>
</dbReference>
<dbReference type="InterPro" id="IPR007121">
    <property type="entry name" value="RNA_pol_bsu_CS"/>
</dbReference>
<dbReference type="InterPro" id="IPR007644">
    <property type="entry name" value="RNA_pol_bsu_protrusion"/>
</dbReference>
<dbReference type="InterPro" id="IPR007642">
    <property type="entry name" value="RNA_pol_Rpb2_2"/>
</dbReference>
<dbReference type="InterPro" id="IPR037034">
    <property type="entry name" value="RNA_pol_Rpb2_2_sf"/>
</dbReference>
<dbReference type="InterPro" id="IPR007645">
    <property type="entry name" value="RNA_pol_Rpb2_3"/>
</dbReference>
<dbReference type="InterPro" id="IPR007641">
    <property type="entry name" value="RNA_pol_Rpb2_7"/>
</dbReference>
<dbReference type="InterPro" id="IPR014724">
    <property type="entry name" value="RNA_pol_RPB2_OB-fold"/>
</dbReference>
<dbReference type="NCBIfam" id="NF001616">
    <property type="entry name" value="PRK00405.1"/>
    <property type="match status" value="1"/>
</dbReference>
<dbReference type="NCBIfam" id="TIGR02013">
    <property type="entry name" value="rpoB"/>
    <property type="match status" value="1"/>
</dbReference>
<dbReference type="PANTHER" id="PTHR20856">
    <property type="entry name" value="DNA-DIRECTED RNA POLYMERASE I SUBUNIT 2"/>
    <property type="match status" value="1"/>
</dbReference>
<dbReference type="Pfam" id="PF04563">
    <property type="entry name" value="RNA_pol_Rpb2_1"/>
    <property type="match status" value="1"/>
</dbReference>
<dbReference type="Pfam" id="PF04561">
    <property type="entry name" value="RNA_pol_Rpb2_2"/>
    <property type="match status" value="1"/>
</dbReference>
<dbReference type="Pfam" id="PF04565">
    <property type="entry name" value="RNA_pol_Rpb2_3"/>
    <property type="match status" value="1"/>
</dbReference>
<dbReference type="Pfam" id="PF10385">
    <property type="entry name" value="RNA_pol_Rpb2_45"/>
    <property type="match status" value="1"/>
</dbReference>
<dbReference type="Pfam" id="PF00562">
    <property type="entry name" value="RNA_pol_Rpb2_6"/>
    <property type="match status" value="1"/>
</dbReference>
<dbReference type="Pfam" id="PF04560">
    <property type="entry name" value="RNA_pol_Rpb2_7"/>
    <property type="match status" value="1"/>
</dbReference>
<dbReference type="SUPFAM" id="SSF64484">
    <property type="entry name" value="beta and beta-prime subunits of DNA dependent RNA-polymerase"/>
    <property type="match status" value="1"/>
</dbReference>
<dbReference type="PROSITE" id="PS01166">
    <property type="entry name" value="RNA_POL_BETA"/>
    <property type="match status" value="1"/>
</dbReference>
<keyword id="KW-0240">DNA-directed RNA polymerase</keyword>
<keyword id="KW-0548">Nucleotidyltransferase</keyword>
<keyword id="KW-1185">Reference proteome</keyword>
<keyword id="KW-0804">Transcription</keyword>
<keyword id="KW-0808">Transferase</keyword>
<proteinExistence type="inferred from homology"/>
<comment type="function">
    <text evidence="1">DNA-dependent RNA polymerase catalyzes the transcription of DNA into RNA using the four ribonucleoside triphosphates as substrates.</text>
</comment>
<comment type="catalytic activity">
    <reaction evidence="1">
        <text>RNA(n) + a ribonucleoside 5'-triphosphate = RNA(n+1) + diphosphate</text>
        <dbReference type="Rhea" id="RHEA:21248"/>
        <dbReference type="Rhea" id="RHEA-COMP:14527"/>
        <dbReference type="Rhea" id="RHEA-COMP:17342"/>
        <dbReference type="ChEBI" id="CHEBI:33019"/>
        <dbReference type="ChEBI" id="CHEBI:61557"/>
        <dbReference type="ChEBI" id="CHEBI:140395"/>
        <dbReference type="EC" id="2.7.7.6"/>
    </reaction>
</comment>
<comment type="subunit">
    <text evidence="1">The RNAP catalytic core consists of 2 alpha, 1 beta, 1 beta' and 1 omega subunit. When a sigma factor is associated with the core the holoenzyme is formed, which can initiate transcription.</text>
</comment>
<comment type="similarity">
    <text evidence="1">Belongs to the RNA polymerase beta chain family.</text>
</comment>
<comment type="sequence caution" evidence="3">
    <conflict type="erroneous initiation">
        <sequence resource="EMBL-CDS" id="BAE82252"/>
    </conflict>
</comment>
<accession>Q250P0</accession>